<sequence length="600" mass="65085">MLPSHKQTISQLLSDAVGTLLPEGTNRPEIVLERPKQAAHGDIACNVALQLAKPLGTNPRELANRIADGIRADARGQRLVSAVEIAGPGFINLRLSPTARTDVLAAVFAEGDRYGAADLHDGAPVLVEFVSANPTGPLHVGHGRQAALGDALAALLEWQGHKVHREFYYNDAGVQIHNLAVSVQARARGFKPGDTGWPEAAYNGDYIADIAADYLAGKTVRASDGEPVTGARDVENIEAIRRFAVTYLRNEQDIDLQAFGVKFDHYYLESSLYADGKVQQTVDALIAAGKTYEQEGALWLRTTDDGDDKDRVMRKSDGSYTYFVPDVAYHTTKWGRGFTQVINVQGSDHHGTIARVRAGLQGLDLGIPKGYPDYVLHKMVTVMKDGAEVKISKRAGSYVTVRDLIEWSNGDAESEAGVDTIRACVESGAPNWPGRFTRGRDAVRFFLLSRKADTEFVFDVDLALKQSDENPVYYVQYAHARICSVFEQWHAREGGDAASLAGADLAAVAGPEASPQAVALVQRIAAFPDMLADAARELAPHAVAFYLRDLAGDFHAFYNADRVLVDDDAVKRARLALLAATRQVLRNGLAVIGVSAPQKM</sequence>
<dbReference type="EC" id="6.1.1.19" evidence="1"/>
<dbReference type="EMBL" id="AL646052">
    <property type="protein sequence ID" value="CAD13815.1"/>
    <property type="molecule type" value="Genomic_DNA"/>
</dbReference>
<dbReference type="RefSeq" id="WP_011000254.1">
    <property type="nucleotide sequence ID" value="NC_003295.1"/>
</dbReference>
<dbReference type="SMR" id="Q8Y2P8"/>
<dbReference type="STRING" id="267608.RSc0287"/>
<dbReference type="EnsemblBacteria" id="CAD13815">
    <property type="protein sequence ID" value="CAD13815"/>
    <property type="gene ID" value="RSc0287"/>
</dbReference>
<dbReference type="KEGG" id="rso:RSc0287"/>
<dbReference type="eggNOG" id="COG0018">
    <property type="taxonomic scope" value="Bacteria"/>
</dbReference>
<dbReference type="HOGENOM" id="CLU_006406_0_1_4"/>
<dbReference type="Proteomes" id="UP000001436">
    <property type="component" value="Chromosome"/>
</dbReference>
<dbReference type="GO" id="GO:0005737">
    <property type="term" value="C:cytoplasm"/>
    <property type="evidence" value="ECO:0007669"/>
    <property type="project" value="UniProtKB-SubCell"/>
</dbReference>
<dbReference type="GO" id="GO:0004814">
    <property type="term" value="F:arginine-tRNA ligase activity"/>
    <property type="evidence" value="ECO:0007669"/>
    <property type="project" value="UniProtKB-UniRule"/>
</dbReference>
<dbReference type="GO" id="GO:0005524">
    <property type="term" value="F:ATP binding"/>
    <property type="evidence" value="ECO:0007669"/>
    <property type="project" value="UniProtKB-UniRule"/>
</dbReference>
<dbReference type="GO" id="GO:0006420">
    <property type="term" value="P:arginyl-tRNA aminoacylation"/>
    <property type="evidence" value="ECO:0007669"/>
    <property type="project" value="UniProtKB-UniRule"/>
</dbReference>
<dbReference type="CDD" id="cd07956">
    <property type="entry name" value="Anticodon_Ia_Arg"/>
    <property type="match status" value="1"/>
</dbReference>
<dbReference type="CDD" id="cd00671">
    <property type="entry name" value="ArgRS_core"/>
    <property type="match status" value="1"/>
</dbReference>
<dbReference type="FunFam" id="1.10.730.10:FF:000008">
    <property type="entry name" value="Arginine--tRNA ligase"/>
    <property type="match status" value="1"/>
</dbReference>
<dbReference type="FunFam" id="3.40.50.620:FF:000062">
    <property type="entry name" value="Arginine--tRNA ligase"/>
    <property type="match status" value="1"/>
</dbReference>
<dbReference type="Gene3D" id="3.30.1360.70">
    <property type="entry name" value="Arginyl tRNA synthetase N-terminal domain"/>
    <property type="match status" value="1"/>
</dbReference>
<dbReference type="Gene3D" id="3.40.50.620">
    <property type="entry name" value="HUPs"/>
    <property type="match status" value="1"/>
</dbReference>
<dbReference type="Gene3D" id="1.10.730.10">
    <property type="entry name" value="Isoleucyl-tRNA Synthetase, Domain 1"/>
    <property type="match status" value="1"/>
</dbReference>
<dbReference type="HAMAP" id="MF_00123">
    <property type="entry name" value="Arg_tRNA_synth"/>
    <property type="match status" value="1"/>
</dbReference>
<dbReference type="InterPro" id="IPR001412">
    <property type="entry name" value="aa-tRNA-synth_I_CS"/>
</dbReference>
<dbReference type="InterPro" id="IPR001278">
    <property type="entry name" value="Arg-tRNA-ligase"/>
</dbReference>
<dbReference type="InterPro" id="IPR005148">
    <property type="entry name" value="Arg-tRNA-synth_N"/>
</dbReference>
<dbReference type="InterPro" id="IPR036695">
    <property type="entry name" value="Arg-tRNA-synth_N_sf"/>
</dbReference>
<dbReference type="InterPro" id="IPR035684">
    <property type="entry name" value="ArgRS_core"/>
</dbReference>
<dbReference type="InterPro" id="IPR008909">
    <property type="entry name" value="DALR_anticod-bd"/>
</dbReference>
<dbReference type="InterPro" id="IPR014729">
    <property type="entry name" value="Rossmann-like_a/b/a_fold"/>
</dbReference>
<dbReference type="InterPro" id="IPR009080">
    <property type="entry name" value="tRNAsynth_Ia_anticodon-bd"/>
</dbReference>
<dbReference type="NCBIfam" id="TIGR00456">
    <property type="entry name" value="argS"/>
    <property type="match status" value="1"/>
</dbReference>
<dbReference type="PANTHER" id="PTHR11956:SF5">
    <property type="entry name" value="ARGININE--TRNA LIGASE, CYTOPLASMIC"/>
    <property type="match status" value="1"/>
</dbReference>
<dbReference type="PANTHER" id="PTHR11956">
    <property type="entry name" value="ARGINYL-TRNA SYNTHETASE"/>
    <property type="match status" value="1"/>
</dbReference>
<dbReference type="Pfam" id="PF03485">
    <property type="entry name" value="Arg_tRNA_synt_N"/>
    <property type="match status" value="1"/>
</dbReference>
<dbReference type="Pfam" id="PF05746">
    <property type="entry name" value="DALR_1"/>
    <property type="match status" value="1"/>
</dbReference>
<dbReference type="Pfam" id="PF00750">
    <property type="entry name" value="tRNA-synt_1d"/>
    <property type="match status" value="1"/>
</dbReference>
<dbReference type="PRINTS" id="PR01038">
    <property type="entry name" value="TRNASYNTHARG"/>
</dbReference>
<dbReference type="SMART" id="SM01016">
    <property type="entry name" value="Arg_tRNA_synt_N"/>
    <property type="match status" value="1"/>
</dbReference>
<dbReference type="SMART" id="SM00836">
    <property type="entry name" value="DALR_1"/>
    <property type="match status" value="1"/>
</dbReference>
<dbReference type="SUPFAM" id="SSF47323">
    <property type="entry name" value="Anticodon-binding domain of a subclass of class I aminoacyl-tRNA synthetases"/>
    <property type="match status" value="1"/>
</dbReference>
<dbReference type="SUPFAM" id="SSF55190">
    <property type="entry name" value="Arginyl-tRNA synthetase (ArgRS), N-terminal 'additional' domain"/>
    <property type="match status" value="1"/>
</dbReference>
<dbReference type="SUPFAM" id="SSF52374">
    <property type="entry name" value="Nucleotidylyl transferase"/>
    <property type="match status" value="1"/>
</dbReference>
<dbReference type="PROSITE" id="PS00178">
    <property type="entry name" value="AA_TRNA_LIGASE_I"/>
    <property type="match status" value="1"/>
</dbReference>
<protein>
    <recommendedName>
        <fullName evidence="1">Arginine--tRNA ligase</fullName>
        <ecNumber evidence="1">6.1.1.19</ecNumber>
    </recommendedName>
    <alternativeName>
        <fullName evidence="1">Arginyl-tRNA synthetase</fullName>
        <shortName evidence="1">ArgRS</shortName>
    </alternativeName>
</protein>
<proteinExistence type="inferred from homology"/>
<feature type="chain" id="PRO_0000151595" description="Arginine--tRNA ligase">
    <location>
        <begin position="1"/>
        <end position="600"/>
    </location>
</feature>
<feature type="short sequence motif" description="'HIGH' region">
    <location>
        <begin position="132"/>
        <end position="142"/>
    </location>
</feature>
<comment type="catalytic activity">
    <reaction evidence="1">
        <text>tRNA(Arg) + L-arginine + ATP = L-arginyl-tRNA(Arg) + AMP + diphosphate</text>
        <dbReference type="Rhea" id="RHEA:20301"/>
        <dbReference type="Rhea" id="RHEA-COMP:9658"/>
        <dbReference type="Rhea" id="RHEA-COMP:9673"/>
        <dbReference type="ChEBI" id="CHEBI:30616"/>
        <dbReference type="ChEBI" id="CHEBI:32682"/>
        <dbReference type="ChEBI" id="CHEBI:33019"/>
        <dbReference type="ChEBI" id="CHEBI:78442"/>
        <dbReference type="ChEBI" id="CHEBI:78513"/>
        <dbReference type="ChEBI" id="CHEBI:456215"/>
        <dbReference type="EC" id="6.1.1.19"/>
    </reaction>
</comment>
<comment type="subunit">
    <text evidence="1">Monomer.</text>
</comment>
<comment type="subcellular location">
    <subcellularLocation>
        <location evidence="1">Cytoplasm</location>
    </subcellularLocation>
</comment>
<comment type="similarity">
    <text evidence="1">Belongs to the class-I aminoacyl-tRNA synthetase family.</text>
</comment>
<name>SYR_RALN1</name>
<organism>
    <name type="scientific">Ralstonia nicotianae (strain ATCC BAA-1114 / GMI1000)</name>
    <name type="common">Ralstonia solanacearum</name>
    <dbReference type="NCBI Taxonomy" id="267608"/>
    <lineage>
        <taxon>Bacteria</taxon>
        <taxon>Pseudomonadati</taxon>
        <taxon>Pseudomonadota</taxon>
        <taxon>Betaproteobacteria</taxon>
        <taxon>Burkholderiales</taxon>
        <taxon>Burkholderiaceae</taxon>
        <taxon>Ralstonia</taxon>
        <taxon>Ralstonia solanacearum species complex</taxon>
    </lineage>
</organism>
<accession>Q8Y2P8</accession>
<keyword id="KW-0030">Aminoacyl-tRNA synthetase</keyword>
<keyword id="KW-0067">ATP-binding</keyword>
<keyword id="KW-0963">Cytoplasm</keyword>
<keyword id="KW-0436">Ligase</keyword>
<keyword id="KW-0547">Nucleotide-binding</keyword>
<keyword id="KW-0648">Protein biosynthesis</keyword>
<keyword id="KW-1185">Reference proteome</keyword>
<evidence type="ECO:0000255" key="1">
    <source>
        <dbReference type="HAMAP-Rule" id="MF_00123"/>
    </source>
</evidence>
<reference key="1">
    <citation type="journal article" date="2002" name="Nature">
        <title>Genome sequence of the plant pathogen Ralstonia solanacearum.</title>
        <authorList>
            <person name="Salanoubat M."/>
            <person name="Genin S."/>
            <person name="Artiguenave F."/>
            <person name="Gouzy J."/>
            <person name="Mangenot S."/>
            <person name="Arlat M."/>
            <person name="Billault A."/>
            <person name="Brottier P."/>
            <person name="Camus J.-C."/>
            <person name="Cattolico L."/>
            <person name="Chandler M."/>
            <person name="Choisne N."/>
            <person name="Claudel-Renard C."/>
            <person name="Cunnac S."/>
            <person name="Demange N."/>
            <person name="Gaspin C."/>
            <person name="Lavie M."/>
            <person name="Moisan A."/>
            <person name="Robert C."/>
            <person name="Saurin W."/>
            <person name="Schiex T."/>
            <person name="Siguier P."/>
            <person name="Thebault P."/>
            <person name="Whalen M."/>
            <person name="Wincker P."/>
            <person name="Levy M."/>
            <person name="Weissenbach J."/>
            <person name="Boucher C.A."/>
        </authorList>
    </citation>
    <scope>NUCLEOTIDE SEQUENCE [LARGE SCALE GENOMIC DNA]</scope>
    <source>
        <strain>ATCC BAA-1114 / GMI1000</strain>
    </source>
</reference>
<gene>
    <name evidence="1" type="primary">argS</name>
    <name type="ordered locus">RSc0287</name>
    <name type="ORF">RS03254</name>
</gene>